<sequence length="131" mass="15077">MNLYEIMLEHFAPKGSERGIFTYLLAQSDEEVYEWLKTDPSLSDGRAVYTPYQDNEANGKTYAIYNQSFDIVGHEKYKDRMIRLKGELNDEVELTDLYYGMTLVGWSMVKSDIPSEQIELLKDTGISIESA</sequence>
<name>YOQY_BACSU</name>
<dbReference type="EMBL" id="AL009126">
    <property type="protein sequence ID" value="CAB13939.1"/>
    <property type="molecule type" value="Genomic_DNA"/>
</dbReference>
<dbReference type="RefSeq" id="NP_389929.1">
    <property type="nucleotide sequence ID" value="NC_000964.3"/>
</dbReference>
<dbReference type="RefSeq" id="WP_004399280.1">
    <property type="nucleotide sequence ID" value="NZ_OZ025638.1"/>
</dbReference>
<dbReference type="FunCoup" id="O31914">
    <property type="interactions" value="34"/>
</dbReference>
<dbReference type="STRING" id="224308.BSU20470"/>
<dbReference type="PaxDb" id="224308-BSU20470"/>
<dbReference type="EnsemblBacteria" id="CAB13939">
    <property type="protein sequence ID" value="CAB13939"/>
    <property type="gene ID" value="BSU_20470"/>
</dbReference>
<dbReference type="GeneID" id="939509"/>
<dbReference type="KEGG" id="bsu:BSU20470"/>
<dbReference type="PATRIC" id="fig|224308.179.peg.2237"/>
<dbReference type="InParanoid" id="O31914"/>
<dbReference type="OrthoDB" id="2891906at2"/>
<dbReference type="BioCyc" id="BSUB:BSU20470-MONOMER"/>
<dbReference type="Proteomes" id="UP000001570">
    <property type="component" value="Chromosome"/>
</dbReference>
<reference key="1">
    <citation type="journal article" date="1997" name="Nature">
        <title>The complete genome sequence of the Gram-positive bacterium Bacillus subtilis.</title>
        <authorList>
            <person name="Kunst F."/>
            <person name="Ogasawara N."/>
            <person name="Moszer I."/>
            <person name="Albertini A.M."/>
            <person name="Alloni G."/>
            <person name="Azevedo V."/>
            <person name="Bertero M.G."/>
            <person name="Bessieres P."/>
            <person name="Bolotin A."/>
            <person name="Borchert S."/>
            <person name="Borriss R."/>
            <person name="Boursier L."/>
            <person name="Brans A."/>
            <person name="Braun M."/>
            <person name="Brignell S.C."/>
            <person name="Bron S."/>
            <person name="Brouillet S."/>
            <person name="Bruschi C.V."/>
            <person name="Caldwell B."/>
            <person name="Capuano V."/>
            <person name="Carter N.M."/>
            <person name="Choi S.-K."/>
            <person name="Codani J.-J."/>
            <person name="Connerton I.F."/>
            <person name="Cummings N.J."/>
            <person name="Daniel R.A."/>
            <person name="Denizot F."/>
            <person name="Devine K.M."/>
            <person name="Duesterhoeft A."/>
            <person name="Ehrlich S.D."/>
            <person name="Emmerson P.T."/>
            <person name="Entian K.-D."/>
            <person name="Errington J."/>
            <person name="Fabret C."/>
            <person name="Ferrari E."/>
            <person name="Foulger D."/>
            <person name="Fritz C."/>
            <person name="Fujita M."/>
            <person name="Fujita Y."/>
            <person name="Fuma S."/>
            <person name="Galizzi A."/>
            <person name="Galleron N."/>
            <person name="Ghim S.-Y."/>
            <person name="Glaser P."/>
            <person name="Goffeau A."/>
            <person name="Golightly E.J."/>
            <person name="Grandi G."/>
            <person name="Guiseppi G."/>
            <person name="Guy B.J."/>
            <person name="Haga K."/>
            <person name="Haiech J."/>
            <person name="Harwood C.R."/>
            <person name="Henaut A."/>
            <person name="Hilbert H."/>
            <person name="Holsappel S."/>
            <person name="Hosono S."/>
            <person name="Hullo M.-F."/>
            <person name="Itaya M."/>
            <person name="Jones L.-M."/>
            <person name="Joris B."/>
            <person name="Karamata D."/>
            <person name="Kasahara Y."/>
            <person name="Klaerr-Blanchard M."/>
            <person name="Klein C."/>
            <person name="Kobayashi Y."/>
            <person name="Koetter P."/>
            <person name="Koningstein G."/>
            <person name="Krogh S."/>
            <person name="Kumano M."/>
            <person name="Kurita K."/>
            <person name="Lapidus A."/>
            <person name="Lardinois S."/>
            <person name="Lauber J."/>
            <person name="Lazarevic V."/>
            <person name="Lee S.-M."/>
            <person name="Levine A."/>
            <person name="Liu H."/>
            <person name="Masuda S."/>
            <person name="Mauel C."/>
            <person name="Medigue C."/>
            <person name="Medina N."/>
            <person name="Mellado R.P."/>
            <person name="Mizuno M."/>
            <person name="Moestl D."/>
            <person name="Nakai S."/>
            <person name="Noback M."/>
            <person name="Noone D."/>
            <person name="O'Reilly M."/>
            <person name="Ogawa K."/>
            <person name="Ogiwara A."/>
            <person name="Oudega B."/>
            <person name="Park S.-H."/>
            <person name="Parro V."/>
            <person name="Pohl T.M."/>
            <person name="Portetelle D."/>
            <person name="Porwollik S."/>
            <person name="Prescott A.M."/>
            <person name="Presecan E."/>
            <person name="Pujic P."/>
            <person name="Purnelle B."/>
            <person name="Rapoport G."/>
            <person name="Rey M."/>
            <person name="Reynolds S."/>
            <person name="Rieger M."/>
            <person name="Rivolta C."/>
            <person name="Rocha E."/>
            <person name="Roche B."/>
            <person name="Rose M."/>
            <person name="Sadaie Y."/>
            <person name="Sato T."/>
            <person name="Scanlan E."/>
            <person name="Schleich S."/>
            <person name="Schroeter R."/>
            <person name="Scoffone F."/>
            <person name="Sekiguchi J."/>
            <person name="Sekowska A."/>
            <person name="Seror S.J."/>
            <person name="Serror P."/>
            <person name="Shin B.-S."/>
            <person name="Soldo B."/>
            <person name="Sorokin A."/>
            <person name="Tacconi E."/>
            <person name="Takagi T."/>
            <person name="Takahashi H."/>
            <person name="Takemaru K."/>
            <person name="Takeuchi M."/>
            <person name="Tamakoshi A."/>
            <person name="Tanaka T."/>
            <person name="Terpstra P."/>
            <person name="Tognoni A."/>
            <person name="Tosato V."/>
            <person name="Uchiyama S."/>
            <person name="Vandenbol M."/>
            <person name="Vannier F."/>
            <person name="Vassarotti A."/>
            <person name="Viari A."/>
            <person name="Wambutt R."/>
            <person name="Wedler E."/>
            <person name="Wedler H."/>
            <person name="Weitzenegger T."/>
            <person name="Winters P."/>
            <person name="Wipat A."/>
            <person name="Yamamoto H."/>
            <person name="Yamane K."/>
            <person name="Yasumoto K."/>
            <person name="Yata K."/>
            <person name="Yoshida K."/>
            <person name="Yoshikawa H.-F."/>
            <person name="Zumstein E."/>
            <person name="Yoshikawa H."/>
            <person name="Danchin A."/>
        </authorList>
    </citation>
    <scope>NUCLEOTIDE SEQUENCE [LARGE SCALE GENOMIC DNA]</scope>
    <source>
        <strain>168</strain>
    </source>
</reference>
<protein>
    <recommendedName>
        <fullName>SPbeta prophage-derived uncharacterized protein YoqY</fullName>
    </recommendedName>
</protein>
<accession>O31914</accession>
<proteinExistence type="predicted"/>
<gene>
    <name type="primary">yoqY</name>
    <name type="ordered locus">BSU20470</name>
</gene>
<keyword id="KW-1185">Reference proteome</keyword>
<feature type="chain" id="PRO_0000360478" description="SPbeta prophage-derived uncharacterized protein YoqY">
    <location>
        <begin position="1"/>
        <end position="131"/>
    </location>
</feature>
<organism>
    <name type="scientific">Bacillus subtilis (strain 168)</name>
    <dbReference type="NCBI Taxonomy" id="224308"/>
    <lineage>
        <taxon>Bacteria</taxon>
        <taxon>Bacillati</taxon>
        <taxon>Bacillota</taxon>
        <taxon>Bacilli</taxon>
        <taxon>Bacillales</taxon>
        <taxon>Bacillaceae</taxon>
        <taxon>Bacillus</taxon>
    </lineage>
</organism>